<organismHost>
    <name type="scientific">Acanthamoeba polyphaga</name>
    <name type="common">Amoeba</name>
    <dbReference type="NCBI Taxonomy" id="5757"/>
</organismHost>
<keyword id="KW-0040">ANK repeat</keyword>
<keyword id="KW-0175">Coiled coil</keyword>
<keyword id="KW-1185">Reference proteome</keyword>
<keyword id="KW-0677">Repeat</keyword>
<accession>Q5UPV1</accession>
<name>YL271_MIMIV</name>
<sequence length="728" mass="83052">MDIIHHFHNGQTIFDIMMTRIINNRNFQRMIDLEAPHTKQCYFTILNEQETISNVPVGTGLCVFTYHPQNRISFDELNRIFKYTNDGVYLRQVFLPTHIPRHYKCRINDQQYTNMVILGKRYDLRKSETYIELIQLGLDVISDVNVIYWTSKQNYIDATKYLISIGANIKTAIYSASKFGNLDLIISIIDGKNKDIILTAVKCMIADYHLDLAKEMISIYSELLGTEVVELTTYLESNSKLVKSTKSTKSSGSPKSIKPKKSNQNNNAKINVSQNDNSTICFDKKVQQNEITVDKMSSAKEQALNVYKEIENMENFILNKINITKKKALDKIKEIENIENTVVEKLEDKITKSNVSITNTDTITQAIISENLNSLDLLIRQGYDINKILYLACINNKKNVIDYLIDNKGANYEQVHKQLLDSKHHYKNDSTVKYLAKIIMTKSQFENVTDTDEIQQVSKKHYFKEPIHIPLGLGKDDDLSPIMVACRASKNDDQLDLVKMLVSYGFNINSRDKIGRSALHYAVNGSNRKIIEYLLALGADYSFRDNNGDTPMMLAKKSNNLELLDLFQSVPKDTKTIEPKKVTNTTDKTNLNQDIKTAMSICLSSINDNQFESVQKLIMSGFNVSSKDDTKKTLLHMAVVNNNLRIVELLINSGININSQDNLGKTPLMLACQYSHRDSKLAIVEFLLNNNAKILIKAKNNMTAIDLMSKTYNNNIYNLLCERLSINH</sequence>
<reference key="1">
    <citation type="journal article" date="2004" name="Science">
        <title>The 1.2-megabase genome sequence of Mimivirus.</title>
        <authorList>
            <person name="Raoult D."/>
            <person name="Audic S."/>
            <person name="Robert C."/>
            <person name="Abergel C."/>
            <person name="Renesto P."/>
            <person name="Ogata H."/>
            <person name="La Scola B."/>
            <person name="Susan M."/>
            <person name="Claverie J.-M."/>
        </authorList>
    </citation>
    <scope>NUCLEOTIDE SEQUENCE [LARGE SCALE GENOMIC DNA]</scope>
    <source>
        <strain>Rowbotham-Bradford</strain>
    </source>
</reference>
<feature type="chain" id="PRO_0000067166" description="Putative ankyrin repeat protein L271">
    <location>
        <begin position="1"/>
        <end position="728"/>
    </location>
</feature>
<feature type="repeat" description="ANK 1">
    <location>
        <begin position="142"/>
        <end position="171"/>
    </location>
</feature>
<feature type="repeat" description="ANK 2">
    <location>
        <begin position="173"/>
        <end position="198"/>
    </location>
</feature>
<feature type="repeat" description="ANK 3">
    <location>
        <begin position="358"/>
        <end position="383"/>
    </location>
</feature>
<feature type="repeat" description="ANK 4">
    <location>
        <begin position="384"/>
        <end position="414"/>
    </location>
</feature>
<feature type="repeat" description="ANK 5">
    <location>
        <begin position="477"/>
        <end position="510"/>
    </location>
</feature>
<feature type="repeat" description="ANK 6">
    <location>
        <begin position="514"/>
        <end position="543"/>
    </location>
</feature>
<feature type="repeat" description="ANK 7">
    <location>
        <begin position="547"/>
        <end position="576"/>
    </location>
</feature>
<feature type="repeat" description="ANK 8">
    <location>
        <begin position="594"/>
        <end position="626"/>
    </location>
</feature>
<feature type="repeat" description="ANK 9">
    <location>
        <begin position="630"/>
        <end position="659"/>
    </location>
</feature>
<feature type="repeat" description="ANK 10">
    <location>
        <begin position="663"/>
        <end position="696"/>
    </location>
</feature>
<feature type="region of interest" description="Disordered" evidence="2">
    <location>
        <begin position="244"/>
        <end position="271"/>
    </location>
</feature>
<feature type="coiled-coil region" evidence="1">
    <location>
        <begin position="292"/>
        <end position="338"/>
    </location>
</feature>
<feature type="compositionally biased region" description="Low complexity" evidence="2">
    <location>
        <begin position="244"/>
        <end position="267"/>
    </location>
</feature>
<organism>
    <name type="scientific">Acanthamoeba polyphaga mimivirus</name>
    <name type="common">APMV</name>
    <dbReference type="NCBI Taxonomy" id="212035"/>
    <lineage>
        <taxon>Viruses</taxon>
        <taxon>Varidnaviria</taxon>
        <taxon>Bamfordvirae</taxon>
        <taxon>Nucleocytoviricota</taxon>
        <taxon>Megaviricetes</taxon>
        <taxon>Imitervirales</taxon>
        <taxon>Mimiviridae</taxon>
        <taxon>Megamimivirinae</taxon>
        <taxon>Mimivirus</taxon>
        <taxon>Mimivirus bradfordmassiliense</taxon>
    </lineage>
</organism>
<proteinExistence type="predicted"/>
<evidence type="ECO:0000255" key="1"/>
<evidence type="ECO:0000256" key="2">
    <source>
        <dbReference type="SAM" id="MobiDB-lite"/>
    </source>
</evidence>
<gene>
    <name type="ordered locus">MIMI_L271</name>
</gene>
<dbReference type="EMBL" id="AY653733">
    <property type="protein sequence ID" value="AAV50543.1"/>
    <property type="molecule type" value="Genomic_DNA"/>
</dbReference>
<dbReference type="SMR" id="Q5UPV1"/>
<dbReference type="KEGG" id="vg:9924880"/>
<dbReference type="OrthoDB" id="2010at10239"/>
<dbReference type="Proteomes" id="UP000001134">
    <property type="component" value="Genome"/>
</dbReference>
<dbReference type="Gene3D" id="1.25.40.20">
    <property type="entry name" value="Ankyrin repeat-containing domain"/>
    <property type="match status" value="3"/>
</dbReference>
<dbReference type="InterPro" id="IPR002110">
    <property type="entry name" value="Ankyrin_rpt"/>
</dbReference>
<dbReference type="InterPro" id="IPR036770">
    <property type="entry name" value="Ankyrin_rpt-contain_sf"/>
</dbReference>
<dbReference type="InterPro" id="IPR051165">
    <property type="entry name" value="Multifunctional_ANK_Repeat"/>
</dbReference>
<dbReference type="PANTHER" id="PTHR24123">
    <property type="entry name" value="ANKYRIN REPEAT-CONTAINING"/>
    <property type="match status" value="1"/>
</dbReference>
<dbReference type="PANTHER" id="PTHR24123:SF33">
    <property type="entry name" value="PROTEIN HOS4"/>
    <property type="match status" value="1"/>
</dbReference>
<dbReference type="Pfam" id="PF12796">
    <property type="entry name" value="Ank_2"/>
    <property type="match status" value="2"/>
</dbReference>
<dbReference type="SMART" id="SM00248">
    <property type="entry name" value="ANK"/>
    <property type="match status" value="8"/>
</dbReference>
<dbReference type="SUPFAM" id="SSF48403">
    <property type="entry name" value="Ankyrin repeat"/>
    <property type="match status" value="3"/>
</dbReference>
<dbReference type="PROSITE" id="PS50297">
    <property type="entry name" value="ANK_REP_REGION"/>
    <property type="match status" value="1"/>
</dbReference>
<dbReference type="PROSITE" id="PS50088">
    <property type="entry name" value="ANK_REPEAT"/>
    <property type="match status" value="4"/>
</dbReference>
<protein>
    <recommendedName>
        <fullName>Putative ankyrin repeat protein L271</fullName>
    </recommendedName>
</protein>